<dbReference type="EMBL" id="U41763">
    <property type="protein sequence ID" value="AAC50494.1"/>
    <property type="molecule type" value="mRNA"/>
</dbReference>
<dbReference type="EMBL" id="X95486">
    <property type="protein sequence ID" value="CAA64752.1"/>
    <property type="molecule type" value="mRNA"/>
</dbReference>
<dbReference type="EMBL" id="X95487">
    <property type="protein sequence ID" value="CAA64753.1"/>
    <property type="molecule type" value="mRNA"/>
</dbReference>
<dbReference type="EMBL" id="U60802">
    <property type="protein sequence ID" value="AAB40908.1"/>
    <property type="molecule type" value="mRNA"/>
</dbReference>
<dbReference type="EMBL" id="U60803">
    <property type="protein sequence ID" value="AAB40909.1"/>
    <property type="molecule type" value="mRNA"/>
</dbReference>
<dbReference type="EMBL" id="AK302506">
    <property type="protein sequence ID" value="BAH13731.1"/>
    <property type="molecule type" value="mRNA"/>
</dbReference>
<dbReference type="EMBL" id="CH471176">
    <property type="protein sequence ID" value="EAX03047.1"/>
    <property type="molecule type" value="Genomic_DNA"/>
</dbReference>
<dbReference type="CCDS" id="CCDS46662.2">
    <molecule id="P53675-1"/>
</dbReference>
<dbReference type="CCDS" id="CCDS54497.2">
    <molecule id="P53675-2"/>
</dbReference>
<dbReference type="PIR" id="G02757">
    <property type="entry name" value="G02757"/>
</dbReference>
<dbReference type="PIR" id="T09522">
    <property type="entry name" value="T09522"/>
</dbReference>
<dbReference type="RefSeq" id="NP_001826.3">
    <molecule id="P53675-2"/>
    <property type="nucleotide sequence ID" value="NM_001835.4"/>
</dbReference>
<dbReference type="RefSeq" id="NP_009029.3">
    <molecule id="P53675-1"/>
    <property type="nucleotide sequence ID" value="NM_007098.4"/>
</dbReference>
<dbReference type="SMR" id="P53675"/>
<dbReference type="BioGRID" id="113854">
    <property type="interactions" value="234"/>
</dbReference>
<dbReference type="FunCoup" id="P53675">
    <property type="interactions" value="2284"/>
</dbReference>
<dbReference type="IntAct" id="P53675">
    <property type="interactions" value="148"/>
</dbReference>
<dbReference type="MINT" id="P53675"/>
<dbReference type="STRING" id="9606.ENSP00000441158"/>
<dbReference type="MoonDB" id="P53675">
    <property type="type" value="Curated"/>
</dbReference>
<dbReference type="TCDB" id="8.A.137.1.2">
    <property type="family name" value="the clathrin (clathrin) family"/>
</dbReference>
<dbReference type="GlyGen" id="P53675">
    <property type="glycosylation" value="3 sites, 1 O-linked glycan (1 site)"/>
</dbReference>
<dbReference type="iPTMnet" id="P53675"/>
<dbReference type="MetOSite" id="P53675"/>
<dbReference type="PhosphoSitePlus" id="P53675"/>
<dbReference type="SwissPalm" id="P53675"/>
<dbReference type="BioMuta" id="CLTCL1"/>
<dbReference type="DMDM" id="2506298"/>
<dbReference type="jPOST" id="P53675"/>
<dbReference type="MassIVE" id="P53675"/>
<dbReference type="PaxDb" id="9606-ENSP00000441158"/>
<dbReference type="PeptideAtlas" id="P53675"/>
<dbReference type="ProteomicsDB" id="56608">
    <molecule id="P53675-1"/>
</dbReference>
<dbReference type="ProteomicsDB" id="56609">
    <molecule id="P53675-2"/>
</dbReference>
<dbReference type="Pumba" id="P53675"/>
<dbReference type="Antibodypedia" id="50558">
    <property type="antibodies" value="128 antibodies from 20 providers"/>
</dbReference>
<dbReference type="DNASU" id="8218"/>
<dbReference type="Ensembl" id="ENST00000427926.6">
    <molecule id="P53675-1"/>
    <property type="protein sequence ID" value="ENSP00000441158.1"/>
    <property type="gene ID" value="ENSG00000070371.16"/>
</dbReference>
<dbReference type="Ensembl" id="ENST00000621271.4">
    <molecule id="P53675-2"/>
    <property type="protein sequence ID" value="ENSP00000485020.1"/>
    <property type="gene ID" value="ENSG00000070371.16"/>
</dbReference>
<dbReference type="GeneID" id="8218"/>
<dbReference type="KEGG" id="hsa:8218"/>
<dbReference type="MANE-Select" id="ENST00000427926.6">
    <property type="protein sequence ID" value="ENSP00000441158.1"/>
    <property type="RefSeq nucleotide sequence ID" value="NM_007098.4"/>
    <property type="RefSeq protein sequence ID" value="NP_009029.3"/>
</dbReference>
<dbReference type="UCSC" id="uc032qgb.2">
    <molecule id="P53675-1"/>
    <property type="organism name" value="human"/>
</dbReference>
<dbReference type="AGR" id="HGNC:2093"/>
<dbReference type="CTD" id="8218"/>
<dbReference type="DisGeNET" id="8218"/>
<dbReference type="GeneCards" id="CLTCL1"/>
<dbReference type="GeneReviews" id="CLTCL1"/>
<dbReference type="HGNC" id="HGNC:2093">
    <property type="gene designation" value="CLTCL1"/>
</dbReference>
<dbReference type="HPA" id="ENSG00000070371">
    <property type="expression patterns" value="Group enriched (skeletal muscle, testis, tongue)"/>
</dbReference>
<dbReference type="MalaCards" id="CLTCL1"/>
<dbReference type="MIM" id="601273">
    <property type="type" value="gene"/>
</dbReference>
<dbReference type="neXtProt" id="NX_P53675"/>
<dbReference type="OpenTargets" id="ENSG00000070371"/>
<dbReference type="Orphanet" id="453510">
    <property type="disease" value="Congenital insensitivity to pain with severe intellectual disability"/>
</dbReference>
<dbReference type="PharmGKB" id="PA26619"/>
<dbReference type="VEuPathDB" id="HostDB:ENSG00000070371"/>
<dbReference type="eggNOG" id="KOG0985">
    <property type="taxonomic scope" value="Eukaryota"/>
</dbReference>
<dbReference type="GeneTree" id="ENSGT00950000183166"/>
<dbReference type="InParanoid" id="P53675"/>
<dbReference type="OMA" id="HCYDLLH"/>
<dbReference type="OrthoDB" id="9526356at2759"/>
<dbReference type="PAN-GO" id="P53675">
    <property type="GO annotations" value="4 GO annotations based on evolutionary models"/>
</dbReference>
<dbReference type="PhylomeDB" id="P53675"/>
<dbReference type="TreeFam" id="TF300059"/>
<dbReference type="PathwayCommons" id="P53675"/>
<dbReference type="Reactome" id="R-HSA-190873">
    <property type="pathway name" value="Gap junction degradation"/>
</dbReference>
<dbReference type="Reactome" id="R-HSA-196025">
    <property type="pathway name" value="Formation of annular gap junctions"/>
</dbReference>
<dbReference type="Reactome" id="R-HSA-3928665">
    <property type="pathway name" value="EPH-ephrin mediated repulsion of cells"/>
</dbReference>
<dbReference type="Reactome" id="R-HSA-8856825">
    <property type="pathway name" value="Cargo recognition for clathrin-mediated endocytosis"/>
</dbReference>
<dbReference type="Reactome" id="R-HSA-8856828">
    <property type="pathway name" value="Clathrin-mediated endocytosis"/>
</dbReference>
<dbReference type="SignaLink" id="P53675"/>
<dbReference type="SIGNOR" id="P53675"/>
<dbReference type="BioGRID-ORCS" id="8218">
    <property type="hits" value="29 hits in 1164 CRISPR screens"/>
</dbReference>
<dbReference type="CD-CODE" id="91857CE7">
    <property type="entry name" value="Nucleolus"/>
</dbReference>
<dbReference type="ChiTaRS" id="CLTCL1">
    <property type="organism name" value="human"/>
</dbReference>
<dbReference type="GenomeRNAi" id="8218"/>
<dbReference type="Pharos" id="P53675">
    <property type="development level" value="Tbio"/>
</dbReference>
<dbReference type="PRO" id="PR:P53675"/>
<dbReference type="Proteomes" id="UP000005640">
    <property type="component" value="Chromosome 22"/>
</dbReference>
<dbReference type="RNAct" id="P53675">
    <property type="molecule type" value="protein"/>
</dbReference>
<dbReference type="Bgee" id="ENSG00000070371">
    <property type="expression patterns" value="Expressed in gastrocnemius and 133 other cell types or tissues"/>
</dbReference>
<dbReference type="ExpressionAtlas" id="P53675">
    <property type="expression patterns" value="baseline and differential"/>
</dbReference>
<dbReference type="GO" id="GO:0030130">
    <property type="term" value="C:clathrin coat of trans-Golgi network vesicle"/>
    <property type="evidence" value="ECO:0007669"/>
    <property type="project" value="InterPro"/>
</dbReference>
<dbReference type="GO" id="GO:0071439">
    <property type="term" value="C:clathrin complex"/>
    <property type="evidence" value="ECO:0000318"/>
    <property type="project" value="GO_Central"/>
</dbReference>
<dbReference type="GO" id="GO:0045334">
    <property type="term" value="C:clathrin-coated endocytic vesicle"/>
    <property type="evidence" value="ECO:0000318"/>
    <property type="project" value="GO_Central"/>
</dbReference>
<dbReference type="GO" id="GO:0005905">
    <property type="term" value="C:clathrin-coated pit"/>
    <property type="evidence" value="ECO:0000314"/>
    <property type="project" value="UniProtKB"/>
</dbReference>
<dbReference type="GO" id="GO:0030136">
    <property type="term" value="C:clathrin-coated vesicle"/>
    <property type="evidence" value="ECO:0000314"/>
    <property type="project" value="UniProtKB"/>
</dbReference>
<dbReference type="GO" id="GO:0030135">
    <property type="term" value="C:coated vesicle"/>
    <property type="evidence" value="ECO:0000314"/>
    <property type="project" value="UniProtKB"/>
</dbReference>
<dbReference type="GO" id="GO:0005829">
    <property type="term" value="C:cytosol"/>
    <property type="evidence" value="ECO:0000304"/>
    <property type="project" value="Reactome"/>
</dbReference>
<dbReference type="GO" id="GO:0070062">
    <property type="term" value="C:extracellular exosome"/>
    <property type="evidence" value="ECO:0007005"/>
    <property type="project" value="UniProtKB"/>
</dbReference>
<dbReference type="GO" id="GO:0005770">
    <property type="term" value="C:late endosome"/>
    <property type="evidence" value="ECO:0000314"/>
    <property type="project" value="UniProtKB"/>
</dbReference>
<dbReference type="GO" id="GO:0016020">
    <property type="term" value="C:membrane"/>
    <property type="evidence" value="ECO:0007005"/>
    <property type="project" value="UniProtKB"/>
</dbReference>
<dbReference type="GO" id="GO:0097443">
    <property type="term" value="C:sorting endosome"/>
    <property type="evidence" value="ECO:0000314"/>
    <property type="project" value="UniProtKB"/>
</dbReference>
<dbReference type="GO" id="GO:0005819">
    <property type="term" value="C:spindle"/>
    <property type="evidence" value="ECO:0000314"/>
    <property type="project" value="UniProtKB"/>
</dbReference>
<dbReference type="GO" id="GO:0005802">
    <property type="term" value="C:trans-Golgi network"/>
    <property type="evidence" value="ECO:0000314"/>
    <property type="project" value="UniProtKB"/>
</dbReference>
<dbReference type="GO" id="GO:0032051">
    <property type="term" value="F:clathrin light chain binding"/>
    <property type="evidence" value="ECO:0000318"/>
    <property type="project" value="GO_Central"/>
</dbReference>
<dbReference type="GO" id="GO:0005198">
    <property type="term" value="F:structural molecule activity"/>
    <property type="evidence" value="ECO:0007669"/>
    <property type="project" value="InterPro"/>
</dbReference>
<dbReference type="GO" id="GO:0009653">
    <property type="term" value="P:anatomical structure morphogenesis"/>
    <property type="evidence" value="ECO:0000304"/>
    <property type="project" value="ProtInc"/>
</dbReference>
<dbReference type="GO" id="GO:0006886">
    <property type="term" value="P:intracellular protein transport"/>
    <property type="evidence" value="ECO:0007669"/>
    <property type="project" value="InterPro"/>
</dbReference>
<dbReference type="GO" id="GO:0000278">
    <property type="term" value="P:mitotic cell cycle"/>
    <property type="evidence" value="ECO:0000314"/>
    <property type="project" value="UniProtKB"/>
</dbReference>
<dbReference type="GO" id="GO:0046326">
    <property type="term" value="P:positive regulation of D-glucose import"/>
    <property type="evidence" value="ECO:0000315"/>
    <property type="project" value="UniProtKB"/>
</dbReference>
<dbReference type="GO" id="GO:0006898">
    <property type="term" value="P:receptor-mediated endocytosis"/>
    <property type="evidence" value="ECO:0000314"/>
    <property type="project" value="UniProtKB"/>
</dbReference>
<dbReference type="GO" id="GO:0042147">
    <property type="term" value="P:retrograde transport, endosome to Golgi"/>
    <property type="evidence" value="ECO:0000315"/>
    <property type="project" value="UniProtKB"/>
</dbReference>
<dbReference type="FunFam" id="1.25.40.10:FF:000001">
    <property type="entry name" value="Clathrin heavy chain"/>
    <property type="match status" value="1"/>
</dbReference>
<dbReference type="FunFam" id="1.25.40.10:FF:000002">
    <property type="entry name" value="Clathrin heavy chain"/>
    <property type="match status" value="1"/>
</dbReference>
<dbReference type="FunFam" id="1.25.40.10:FF:000007">
    <property type="entry name" value="Clathrin heavy chain"/>
    <property type="match status" value="1"/>
</dbReference>
<dbReference type="FunFam" id="1.25.40.10:FF:000095">
    <property type="entry name" value="Clathrin heavy chain"/>
    <property type="match status" value="1"/>
</dbReference>
<dbReference type="FunFam" id="1.25.40.730:FF:000001">
    <property type="entry name" value="Clathrin heavy chain"/>
    <property type="match status" value="1"/>
</dbReference>
<dbReference type="FunFam" id="2.130.10.110:FF:000001">
    <property type="entry name" value="Clathrin heavy chain"/>
    <property type="match status" value="1"/>
</dbReference>
<dbReference type="Gene3D" id="1.25.40.730">
    <property type="match status" value="1"/>
</dbReference>
<dbReference type="Gene3D" id="2.130.10.110">
    <property type="entry name" value="Clathrin heavy-chain terminal domain"/>
    <property type="match status" value="1"/>
</dbReference>
<dbReference type="Gene3D" id="1.25.40.10">
    <property type="entry name" value="Tetratricopeptide repeat domain"/>
    <property type="match status" value="4"/>
</dbReference>
<dbReference type="InterPro" id="IPR016024">
    <property type="entry name" value="ARM-type_fold"/>
</dbReference>
<dbReference type="InterPro" id="IPR055358">
    <property type="entry name" value="CHCR"/>
</dbReference>
<dbReference type="InterPro" id="IPR000547">
    <property type="entry name" value="Clathrin_H-chain/VPS_repeat"/>
</dbReference>
<dbReference type="InterPro" id="IPR015348">
    <property type="entry name" value="Clathrin_H-chain_linker_core"/>
</dbReference>
<dbReference type="InterPro" id="IPR016025">
    <property type="entry name" value="Clathrin_H-chain_N"/>
</dbReference>
<dbReference type="InterPro" id="IPR022365">
    <property type="entry name" value="Clathrin_H-chain_propeller_rpt"/>
</dbReference>
<dbReference type="InterPro" id="IPR016341">
    <property type="entry name" value="Clathrin_heavy_chain"/>
</dbReference>
<dbReference type="InterPro" id="IPR011990">
    <property type="entry name" value="TPR-like_helical_dom_sf"/>
</dbReference>
<dbReference type="PANTHER" id="PTHR10292:SF6">
    <property type="entry name" value="CLATHRIN HEAVY CHAIN 2"/>
    <property type="match status" value="1"/>
</dbReference>
<dbReference type="PANTHER" id="PTHR10292">
    <property type="entry name" value="CLATHRIN HEAVY CHAIN RELATED"/>
    <property type="match status" value="1"/>
</dbReference>
<dbReference type="Pfam" id="PF00637">
    <property type="entry name" value="Clathrin"/>
    <property type="match status" value="7"/>
</dbReference>
<dbReference type="Pfam" id="PF09268">
    <property type="entry name" value="Clathrin-link"/>
    <property type="match status" value="1"/>
</dbReference>
<dbReference type="Pfam" id="PF13838">
    <property type="entry name" value="Clathrin_H_link"/>
    <property type="match status" value="1"/>
</dbReference>
<dbReference type="Pfam" id="PF01394">
    <property type="entry name" value="Clathrin_propel"/>
    <property type="match status" value="5"/>
</dbReference>
<dbReference type="PIRSF" id="PIRSF002290">
    <property type="entry name" value="Clathrin_H_chain"/>
    <property type="match status" value="1"/>
</dbReference>
<dbReference type="SMART" id="SM00299">
    <property type="entry name" value="CLH"/>
    <property type="match status" value="7"/>
</dbReference>
<dbReference type="SUPFAM" id="SSF48371">
    <property type="entry name" value="ARM repeat"/>
    <property type="match status" value="6"/>
</dbReference>
<dbReference type="SUPFAM" id="SSF50989">
    <property type="entry name" value="Clathrin heavy-chain terminal domain"/>
    <property type="match status" value="1"/>
</dbReference>
<dbReference type="PROSITE" id="PS50236">
    <property type="entry name" value="CHCR"/>
    <property type="match status" value="7"/>
</dbReference>
<name>CLH2_HUMAN</name>
<comment type="function">
    <text evidence="1">Clathrin is the major protein of the polyhedral coat of coated pits and vesicles. Two different adapter protein complexes link the clathrin lattice either to the plasma membrane or to the trans-Golgi network (By similarity).</text>
</comment>
<comment type="subunit">
    <text evidence="2 3 5 10">Clathrin triskelions, composed of 3 heavy chains and 3 light chains, are the basic subunits of the clathrin coat (By similarity). In the presence of light chains, hub assembly is influenced by both the pH and the concentration of calcium (Probable). May interact with OCRL (By similarity). Interacts with AFTPH/aftiphilin (PubMed:15758025).</text>
</comment>
<comment type="interaction">
    <interactant intactId="EBI-358826">
        <id>P53675</id>
    </interactant>
    <interactant intactId="EBI-25475920">
        <id>PRO_0000449631</id>
        <label>rep</label>
        <dbReference type="UniProtKB" id="P0DTD1"/>
    </interactant>
    <organismsDiffer>true</organismsDiffer>
    <experiments>3</experiments>
</comment>
<comment type="subcellular location">
    <subcellularLocation>
        <location evidence="1">Cytoplasmic vesicle membrane</location>
        <topology evidence="1">Peripheral membrane protein</topology>
        <orientation evidence="1">Cytoplasmic side</orientation>
    </subcellularLocation>
    <subcellularLocation>
        <location evidence="1">Membrane</location>
        <location evidence="1">Coated pit</location>
        <topology evidence="1">Peripheral membrane protein</topology>
        <orientation evidence="1">Cytoplasmic side</orientation>
    </subcellularLocation>
    <text evidence="1">Cytoplasmic face of coated pits and vesicles.</text>
</comment>
<comment type="alternative products">
    <event type="alternative splicing"/>
    <isoform>
        <id>P53675-1</id>
        <name>1</name>
        <name>Long</name>
        <name>Brain</name>
        <sequence type="displayed"/>
    </isoform>
    <isoform>
        <id>P53675-2</id>
        <name>2</name>
        <name>Short</name>
        <name>Muscle</name>
        <sequence type="described" ref="VSP_001100"/>
    </isoform>
</comment>
<comment type="tissue specificity">
    <text>Maximal levels in skeletal muscle. High levels in heart and testis. Low expression detected in all other tissues.</text>
</comment>
<comment type="domain">
    <text>The C-terminal third of the heavy chains forms the hub of the triskelion. This region contains the trimerization domain and the light-chain binding domain involved in the assembly of the clathrin lattice.</text>
</comment>
<comment type="domain">
    <text evidence="1">The N-terminal seven-bladed beta-propeller is formed by WD40-like repeats, and projects inward from the polyhedral outer clathrin coat. It constitutes a major protein-protein interaction node (By similarity).</text>
</comment>
<comment type="similarity">
    <text evidence="10">Belongs to the clathrin heavy chain family.</text>
</comment>
<comment type="online information" name="Atlas of Genetics and Cytogenetics in Oncology and Haematology">
    <link uri="https://atlasgeneticsoncology.org/gene/361/CLTCL1"/>
</comment>
<keyword id="KW-0007">Acetylation</keyword>
<keyword id="KW-0025">Alternative splicing</keyword>
<keyword id="KW-0168">Coated pit</keyword>
<keyword id="KW-0968">Cytoplasmic vesicle</keyword>
<keyword id="KW-0472">Membrane</keyword>
<keyword id="KW-0597">Phosphoprotein</keyword>
<keyword id="KW-1267">Proteomics identification</keyword>
<keyword id="KW-1185">Reference proteome</keyword>
<keyword id="KW-0677">Repeat</keyword>
<proteinExistence type="evidence at protein level"/>
<reference key="1">
    <citation type="journal article" date="1996" name="Hum. Mol. Genet.">
        <title>Isolation of a new clathrin heavy chain gene with muscle-specific expression from the region commonly deleted in velo-cardio-facial syndrome.</title>
        <authorList>
            <person name="Sirotkin H."/>
            <person name="Morrow B."/>
            <person name="Dasgupta R."/>
            <person name="Goldberg R."/>
            <person name="Patangali S.R."/>
            <person name="Shi G."/>
            <person name="Cannizzaro L."/>
            <person name="Shprintzen R."/>
            <person name="Weissman S."/>
            <person name="Kucherlapati R."/>
        </authorList>
    </citation>
    <scope>NUCLEOTIDE SEQUENCE [MRNA] (ISOFORM 1)</scope>
    <source>
        <tissue>Fetal brain</tissue>
    </source>
</reference>
<reference key="2">
    <citation type="journal article" date="1996" name="Hum. Mol. Genet.">
        <title>Characterization of a second human clathrin heavy chain polypeptide gene (CLH-22) from chromosome 22q11.</title>
        <authorList>
            <person name="Kedra D."/>
            <person name="Peyrard M."/>
            <person name="Fransson I."/>
            <person name="Collins J.E."/>
            <person name="Dunham I."/>
            <person name="Roe B.A."/>
            <person name="Dumanski J.P."/>
        </authorList>
    </citation>
    <scope>NUCLEOTIDE SEQUENCE [MRNA] (ISOFORM 1)</scope>
    <scope>NUCLEOTIDE SEQUENCE [MRNA] OF 1451-1640 (ISOFORM 2)</scope>
    <source>
        <tissue>Fetal brain</tissue>
        <tissue>Skeletal muscle</tissue>
    </source>
</reference>
<reference key="3">
    <citation type="journal article" date="1996" name="Genomics">
        <title>Cloning and characterization of a novel human clathrin heavy chain gene (CLTCL).</title>
        <authorList>
            <person name="Long K.R."/>
            <person name="Trofatter J.A."/>
            <person name="Ramesh V."/>
            <person name="McCormick M.K."/>
            <person name="Buckler A.J."/>
        </authorList>
    </citation>
    <scope>NUCLEOTIDE SEQUENCE [MRNA] (ISOFORMS 1 AND 2)</scope>
    <scope>VARIANT LYS-691</scope>
</reference>
<reference key="4">
    <citation type="journal article" date="2004" name="Nat. Genet.">
        <title>Complete sequencing and characterization of 21,243 full-length human cDNAs.</title>
        <authorList>
            <person name="Ota T."/>
            <person name="Suzuki Y."/>
            <person name="Nishikawa T."/>
            <person name="Otsuki T."/>
            <person name="Sugiyama T."/>
            <person name="Irie R."/>
            <person name="Wakamatsu A."/>
            <person name="Hayashi K."/>
            <person name="Sato H."/>
            <person name="Nagai K."/>
            <person name="Kimura K."/>
            <person name="Makita H."/>
            <person name="Sekine M."/>
            <person name="Obayashi M."/>
            <person name="Nishi T."/>
            <person name="Shibahara T."/>
            <person name="Tanaka T."/>
            <person name="Ishii S."/>
            <person name="Yamamoto J."/>
            <person name="Saito K."/>
            <person name="Kawai Y."/>
            <person name="Isono Y."/>
            <person name="Nakamura Y."/>
            <person name="Nagahari K."/>
            <person name="Murakami K."/>
            <person name="Yasuda T."/>
            <person name="Iwayanagi T."/>
            <person name="Wagatsuma M."/>
            <person name="Shiratori A."/>
            <person name="Sudo H."/>
            <person name="Hosoiri T."/>
            <person name="Kaku Y."/>
            <person name="Kodaira H."/>
            <person name="Kondo H."/>
            <person name="Sugawara M."/>
            <person name="Takahashi M."/>
            <person name="Kanda K."/>
            <person name="Yokoi T."/>
            <person name="Furuya T."/>
            <person name="Kikkawa E."/>
            <person name="Omura Y."/>
            <person name="Abe K."/>
            <person name="Kamihara K."/>
            <person name="Katsuta N."/>
            <person name="Sato K."/>
            <person name="Tanikawa M."/>
            <person name="Yamazaki M."/>
            <person name="Ninomiya K."/>
            <person name="Ishibashi T."/>
            <person name="Yamashita H."/>
            <person name="Murakawa K."/>
            <person name="Fujimori K."/>
            <person name="Tanai H."/>
            <person name="Kimata M."/>
            <person name="Watanabe M."/>
            <person name="Hiraoka S."/>
            <person name="Chiba Y."/>
            <person name="Ishida S."/>
            <person name="Ono Y."/>
            <person name="Takiguchi S."/>
            <person name="Watanabe S."/>
            <person name="Yosida M."/>
            <person name="Hotuta T."/>
            <person name="Kusano J."/>
            <person name="Kanehori K."/>
            <person name="Takahashi-Fujii A."/>
            <person name="Hara H."/>
            <person name="Tanase T.-O."/>
            <person name="Nomura Y."/>
            <person name="Togiya S."/>
            <person name="Komai F."/>
            <person name="Hara R."/>
            <person name="Takeuchi K."/>
            <person name="Arita M."/>
            <person name="Imose N."/>
            <person name="Musashino K."/>
            <person name="Yuuki H."/>
            <person name="Oshima A."/>
            <person name="Sasaki N."/>
            <person name="Aotsuka S."/>
            <person name="Yoshikawa Y."/>
            <person name="Matsunawa H."/>
            <person name="Ichihara T."/>
            <person name="Shiohata N."/>
            <person name="Sano S."/>
            <person name="Moriya S."/>
            <person name="Momiyama H."/>
            <person name="Satoh N."/>
            <person name="Takami S."/>
            <person name="Terashima Y."/>
            <person name="Suzuki O."/>
            <person name="Nakagawa S."/>
            <person name="Senoh A."/>
            <person name="Mizoguchi H."/>
            <person name="Goto Y."/>
            <person name="Shimizu F."/>
            <person name="Wakebe H."/>
            <person name="Hishigaki H."/>
            <person name="Watanabe T."/>
            <person name="Sugiyama A."/>
            <person name="Takemoto M."/>
            <person name="Kawakami B."/>
            <person name="Yamazaki M."/>
            <person name="Watanabe K."/>
            <person name="Kumagai A."/>
            <person name="Itakura S."/>
            <person name="Fukuzumi Y."/>
            <person name="Fujimori Y."/>
            <person name="Komiyama M."/>
            <person name="Tashiro H."/>
            <person name="Tanigami A."/>
            <person name="Fujiwara T."/>
            <person name="Ono T."/>
            <person name="Yamada K."/>
            <person name="Fujii Y."/>
            <person name="Ozaki K."/>
            <person name="Hirao M."/>
            <person name="Ohmori Y."/>
            <person name="Kawabata A."/>
            <person name="Hikiji T."/>
            <person name="Kobatake N."/>
            <person name="Inagaki H."/>
            <person name="Ikema Y."/>
            <person name="Okamoto S."/>
            <person name="Okitani R."/>
            <person name="Kawakami T."/>
            <person name="Noguchi S."/>
            <person name="Itoh T."/>
            <person name="Shigeta K."/>
            <person name="Senba T."/>
            <person name="Matsumura K."/>
            <person name="Nakajima Y."/>
            <person name="Mizuno T."/>
            <person name="Morinaga M."/>
            <person name="Sasaki M."/>
            <person name="Togashi T."/>
            <person name="Oyama M."/>
            <person name="Hata H."/>
            <person name="Watanabe M."/>
            <person name="Komatsu T."/>
            <person name="Mizushima-Sugano J."/>
            <person name="Satoh T."/>
            <person name="Shirai Y."/>
            <person name="Takahashi Y."/>
            <person name="Nakagawa K."/>
            <person name="Okumura K."/>
            <person name="Nagase T."/>
            <person name="Nomura N."/>
            <person name="Kikuchi H."/>
            <person name="Masuho Y."/>
            <person name="Yamashita R."/>
            <person name="Nakai K."/>
            <person name="Yada T."/>
            <person name="Nakamura Y."/>
            <person name="Ohara O."/>
            <person name="Isogai T."/>
            <person name="Sugano S."/>
        </authorList>
    </citation>
    <scope>NUCLEOTIDE SEQUENCE [LARGE SCALE MRNA] (ISOFORM 2)</scope>
    <source>
        <tissue>Testis</tissue>
    </source>
</reference>
<reference key="5">
    <citation type="submission" date="2005-09" db="EMBL/GenBank/DDBJ databases">
        <authorList>
            <person name="Mural R.J."/>
            <person name="Istrail S."/>
            <person name="Sutton G.G."/>
            <person name="Florea L."/>
            <person name="Halpern A.L."/>
            <person name="Mobarry C.M."/>
            <person name="Lippert R."/>
            <person name="Walenz B."/>
            <person name="Shatkay H."/>
            <person name="Dew I."/>
            <person name="Miller J.R."/>
            <person name="Flanigan M.J."/>
            <person name="Edwards N.J."/>
            <person name="Bolanos R."/>
            <person name="Fasulo D."/>
            <person name="Halldorsson B.V."/>
            <person name="Hannenhalli S."/>
            <person name="Turner R."/>
            <person name="Yooseph S."/>
            <person name="Lu F."/>
            <person name="Nusskern D.R."/>
            <person name="Shue B.C."/>
            <person name="Zheng X.H."/>
            <person name="Zhong F."/>
            <person name="Delcher A.L."/>
            <person name="Huson D.H."/>
            <person name="Kravitz S.A."/>
            <person name="Mouchard L."/>
            <person name="Reinert K."/>
            <person name="Remington K.A."/>
            <person name="Clark A.G."/>
            <person name="Waterman M.S."/>
            <person name="Eichler E.E."/>
            <person name="Adams M.D."/>
            <person name="Hunkapiller M.W."/>
            <person name="Myers E.W."/>
            <person name="Venter J.C."/>
        </authorList>
    </citation>
    <scope>NUCLEOTIDE SEQUENCE [LARGE SCALE GENOMIC DNA]</scope>
</reference>
<reference key="6">
    <citation type="journal article" date="2005" name="Mol. Biol. Cell">
        <title>The aftiphilin/p200/gamma-synergin complex.</title>
        <authorList>
            <person name="Hirst J."/>
            <person name="Borner G.H."/>
            <person name="Harbour M."/>
            <person name="Robinson M.S."/>
        </authorList>
    </citation>
    <scope>INTERACTION WITH AFTPH</scope>
</reference>
<reference key="7">
    <citation type="journal article" date="2010" name="Sci. Signal.">
        <title>Quantitative phosphoproteomics reveals widespread full phosphorylation site occupancy during mitosis.</title>
        <authorList>
            <person name="Olsen J.V."/>
            <person name="Vermeulen M."/>
            <person name="Santamaria A."/>
            <person name="Kumar C."/>
            <person name="Miller M.L."/>
            <person name="Jensen L.J."/>
            <person name="Gnad F."/>
            <person name="Cox J."/>
            <person name="Jensen T.S."/>
            <person name="Nigg E.A."/>
            <person name="Brunak S."/>
            <person name="Mann M."/>
        </authorList>
    </citation>
    <scope>IDENTIFICATION BY MASS SPECTROMETRY [LARGE SCALE ANALYSIS]</scope>
    <source>
        <tissue>Cervix carcinoma</tissue>
    </source>
</reference>
<sequence length="1640" mass="187030">MAQILPVRFQEHFQLQNLGINPANIGFSTLTMESDKFICIREKVGEQAQVTIIDMSDPMAPIRRPISAESAIMNPASKVIALKAGKTLQIFNIEMKSKMKAHTMAEEVIFWKWVSVNTVALVTETAVYHWSMEGDSQPMKMFDRHTSLVGCQVIHYRTDEYQKWLLLVGISAQQNRVVGAMQLYSVDRKVSQPIEGHAAAFAEFKMEGNAKPATLFCFAVRNPTGGKLHIIEVGQPAAGNQPFVKKAVDVFFPPEAQNDFPVAMQIGAKHGVIYLITKYGYLHLYDLESGVCICMNRISADTIFVTAPHKPTSGIIGVNKKGQVLSVCVEEDNIVNYATNVLQNPDLGLRLAVRSNLAGAEKLFVRKFNTLFAQGSYAEAAKVAASAPKGILRTRETVQKFQSIPAQSGQASPLLQYFGILLDQGQLNKLESLELCHLVLQQGRKQLLEKWLKEDKLECSEELGDLVKTTDPMLALSVYLRANVPSKVIQCFAETGQFQKIVLYAKKVGYTPDWIFLLRGVMKISPEQGLQFSRMLVQDEEPLANISQIVDIFMENSLIQQCTSFLLDALKNNRPAEGLLQTWLLEMNLVHAPQVADAILGNKMFTHYDRAHIAQLCEKAGLLQQALEHYTDLYDIKRAVVHTHLLNPEWLVNFFGSLSVEDSVECLHAMLSANIRQNLQLCVQVASKYHEQLGTQALVELFESFKSYKGLFYFLGSIVNFSQDPDVHLKYIQAACKTGQIKEVERICRESSCYNPERVKNFLKEAKLTDQLPLIIVCDRFGFVHDLVLYLYRNNLQRYIEIYVQKVNPSRTPAVIGGLLDVDCSEEVIKHLIMAVRGQFSTDELVAEVEKRNRLKLLLPWLESQIQEGCEEPATHNALAKIYIDSNNSPECFLRENAYYDSSVVGRYCEKRDPHLACVAYERGQCDLELIKVCNENSLFKSEARYLVCRKDPELWAHVLEETNPSRRQLIDQVVQTALSETRDPEEISVTVKAFMTADLPNELIELLEKIVLDNSVFSEHRNLQNLLILTAIKADRTRVMEYISRLDNYDALDIASIAVSSALYEEAFTVFHKFDMNASAIQVLIEHIGNLDRAYEFAERCNEPAVWSQLAQAQLQKDLVKEAINSYIRGDDPSSYLEVVQSASRSNNWEDLVKFLQMARKKGRESYIETELIFALAKTSRVSELEDFINGPNNAHIQQVGDRCYEEGMYEAAKLLYSNVSNFARLASTLVHLGEYQAAVDNSRKASSTRTWKEVCFACMDGQEFRFAQLCGLHIVIHADELEELMCYYQDRGYFEELILLLEAALGLERAHMGMFTELAILYSKFKPQKMLEHLELFWSRVNIPKVLRAAEQAHLWAELVFLYDKYEEYDNAVLTMMSHPTEAWKEGQFKDIITKVANVELCYRALQFYLDYKPLLINDLLLVLSPRLDHTWTVSFFSKAGQLPLVKPYLRSVQSHNNKSVNEALNHLLTEEEDYQGLRASIDAYDNFDNISLAQQLEKHQLMEFRCIAAYLYKGNNWWAQSVELCKKDHLYKDAMQHAAESRDAELAQKLLQWFLEEGKRECFAACLFTCYDLLRPDMVLELAWRHNLVDLAMPYFIQVMREYLSKVDKLDALESLRKQEEHVTEPAPLVFDFDGHE</sequence>
<accession>P53675</accession>
<accession>B7Z7U5</accession>
<accession>Q14017</accession>
<accession>Q15808</accession>
<accession>Q15809</accession>
<gene>
    <name type="primary">CLTCL1</name>
    <name type="synonym">CLH22</name>
    <name type="synonym">CLTCL</name>
    <name type="synonym">CLTD</name>
</gene>
<evidence type="ECO:0000250" key="1"/>
<evidence type="ECO:0000250" key="2">
    <source>
        <dbReference type="UniProtKB" id="Q00610"/>
    </source>
</evidence>
<evidence type="ECO:0000250" key="3">
    <source>
        <dbReference type="UniProtKB" id="Q68FD5"/>
    </source>
</evidence>
<evidence type="ECO:0000255" key="4"/>
<evidence type="ECO:0000269" key="5">
    <source>
    </source>
</evidence>
<evidence type="ECO:0000269" key="6">
    <source>
    </source>
</evidence>
<evidence type="ECO:0000303" key="7">
    <source>
    </source>
</evidence>
<evidence type="ECO:0000303" key="8">
    <source>
    </source>
</evidence>
<evidence type="ECO:0000303" key="9">
    <source>
    </source>
</evidence>
<evidence type="ECO:0000305" key="10"/>
<feature type="initiator methionine" description="Removed" evidence="2">
    <location>
        <position position="1"/>
    </location>
</feature>
<feature type="chain" id="PRO_0000205786" description="Clathrin heavy chain 2">
    <location>
        <begin position="2"/>
        <end position="1640"/>
    </location>
</feature>
<feature type="repeat" description="CHCR 1">
    <location>
        <begin position="537"/>
        <end position="683"/>
    </location>
</feature>
<feature type="repeat" description="CHCR 2">
    <location>
        <begin position="686"/>
        <end position="828"/>
    </location>
</feature>
<feature type="repeat" description="CHCR 3">
    <location>
        <begin position="833"/>
        <end position="972"/>
    </location>
</feature>
<feature type="repeat" description="CHCR 4">
    <location>
        <begin position="979"/>
        <end position="1124"/>
    </location>
</feature>
<feature type="repeat" description="CHCR 5">
    <location>
        <begin position="1128"/>
        <end position="1269"/>
    </location>
</feature>
<feature type="repeat" description="CHCR 6">
    <location>
        <begin position="1274"/>
        <end position="1420"/>
    </location>
</feature>
<feature type="repeat" description="CHCR 7">
    <location>
        <begin position="1423"/>
        <end position="1566"/>
    </location>
</feature>
<feature type="region of interest" description="Globular terminal domain">
    <location>
        <begin position="2"/>
        <end position="479"/>
    </location>
</feature>
<feature type="region of interest" description="WD40-like repeat 1">
    <location>
        <begin position="24"/>
        <end position="67"/>
    </location>
</feature>
<feature type="region of interest" description="WD40-like repeat 2">
    <location>
        <begin position="68"/>
        <end position="107"/>
    </location>
</feature>
<feature type="region of interest" description="WD40-like repeat 3">
    <location>
        <begin position="108"/>
        <end position="149"/>
    </location>
</feature>
<feature type="region of interest" description="WD40-like repeat 4">
    <location>
        <begin position="150"/>
        <end position="195"/>
    </location>
</feature>
<feature type="region of interest" description="WD40-like repeat 5">
    <location>
        <begin position="196"/>
        <end position="257"/>
    </location>
</feature>
<feature type="region of interest" description="WD40-like repeat 6">
    <location>
        <begin position="258"/>
        <end position="301"/>
    </location>
</feature>
<feature type="region of interest" description="WD40-like repeat 7">
    <location>
        <begin position="302"/>
        <end position="330"/>
    </location>
</feature>
<feature type="region of interest" description="Binding site for the uncoating ATPase, involved in lattice disassembly" evidence="4">
    <location>
        <begin position="449"/>
        <end position="465"/>
    </location>
</feature>
<feature type="region of interest" description="Flexible linker">
    <location>
        <begin position="480"/>
        <end position="523"/>
    </location>
</feature>
<feature type="region of interest" description="Heavy chain arm">
    <location>
        <begin position="524"/>
        <end position="1640"/>
    </location>
</feature>
<feature type="region of interest" description="Distal segment">
    <location>
        <begin position="524"/>
        <end position="634"/>
    </location>
</feature>
<feature type="region of interest" description="Proximal segment">
    <location>
        <begin position="639"/>
        <end position="1640"/>
    </location>
</feature>
<feature type="region of interest" description="Involved in binding clathrin light chain" evidence="1">
    <location>
        <begin position="1213"/>
        <end position="1522"/>
    </location>
</feature>
<feature type="region of interest" description="Trimerization" evidence="1">
    <location>
        <begin position="1551"/>
        <end position="1640"/>
    </location>
</feature>
<feature type="modified residue" description="N-acetylalanine" evidence="2">
    <location>
        <position position="2"/>
    </location>
</feature>
<feature type="modified residue" description="Phosphoserine" evidence="2">
    <location>
        <position position="67"/>
    </location>
</feature>
<feature type="modified residue" description="Phosphotyrosine" evidence="3">
    <location>
        <position position="184"/>
    </location>
</feature>
<feature type="modified residue" description="Phosphothreonine" evidence="2">
    <location>
        <position position="394"/>
    </location>
</feature>
<feature type="modified residue" description="Phosphotyrosine" evidence="2">
    <location>
        <position position="634"/>
    </location>
</feature>
<feature type="modified residue" description="N6-succinyllysine" evidence="3">
    <location>
        <position position="737"/>
    </location>
</feature>
<feature type="modified residue" description="N6-acetyllysine" evidence="2">
    <location>
        <position position="856"/>
    </location>
</feature>
<feature type="modified residue" description="Phosphotyrosine" evidence="3">
    <location>
        <position position="899"/>
    </location>
</feature>
<feature type="modified residue" description="Phosphoserine" evidence="3">
    <location>
        <position position="1167"/>
    </location>
</feature>
<feature type="modified residue" description="Phosphotyrosine" evidence="3">
    <location>
        <position position="1206"/>
    </location>
</feature>
<feature type="modified residue" description="Phosphoserine" evidence="2">
    <location>
        <position position="1229"/>
    </location>
</feature>
<feature type="modified residue" description="N6-acetyllysine; alternate" evidence="2">
    <location>
        <position position="1441"/>
    </location>
</feature>
<feature type="modified residue" description="N6-succinyllysine; alternate" evidence="3">
    <location>
        <position position="1441"/>
    </location>
</feature>
<feature type="modified residue" description="Phosphotyrosine" evidence="2">
    <location>
        <position position="1477"/>
    </location>
</feature>
<feature type="modified residue" description="Phosphotyrosine" evidence="3">
    <location>
        <position position="1487"/>
    </location>
</feature>
<feature type="modified residue" description="Phosphoserine" evidence="2">
    <location>
        <position position="1494"/>
    </location>
</feature>
<feature type="modified residue" description="N6-acetyllysine" evidence="2">
    <location>
        <position position="1501"/>
    </location>
</feature>
<feature type="splice variant" id="VSP_001100" description="In isoform 2." evidence="7 8 9">
    <location>
        <begin position="1479"/>
        <end position="1535"/>
    </location>
</feature>
<feature type="sequence variant" id="VAR_055653" description="In dbSNP:rs3747059.">
    <original>P</original>
    <variation>L</variation>
    <location>
        <position position="61"/>
    </location>
</feature>
<feature type="sequence variant" id="VAR_055654" description="In dbSNP:rs5746697.">
    <original>K</original>
    <variation>R</variation>
    <location>
        <position position="205"/>
    </location>
</feature>
<feature type="sequence variant" id="VAR_055655" description="In dbSNP:rs807459.">
    <original>Y</original>
    <variation>C</variation>
    <location>
        <position position="279"/>
    </location>
</feature>
<feature type="sequence variant" id="VAR_055656" description="In dbSNP:rs1060374." evidence="6">
    <original>E</original>
    <variation>K</variation>
    <location>
        <position position="691"/>
    </location>
</feature>
<feature type="sequence variant" id="VAR_055657" description="In dbSNP:rs35398725.">
    <original>K</original>
    <variation>R</variation>
    <location>
        <position position="941"/>
    </location>
</feature>
<feature type="sequence variant" id="VAR_055658" description="In dbSNP:rs36077768.">
    <original>R</original>
    <variation>H</variation>
    <location>
        <position position="945"/>
    </location>
</feature>
<feature type="sequence variant" id="VAR_055659" description="In dbSNP:rs712952.">
    <original>R</original>
    <variation>C</variation>
    <location>
        <position position="1046"/>
    </location>
</feature>
<feature type="sequence variant" id="VAR_059214" description="In dbSNP:rs807547.">
    <original>N</original>
    <variation>S</variation>
    <location>
        <position position="1195"/>
    </location>
</feature>
<feature type="sequence variant" id="VAR_059215" description="In dbSNP:rs1061325.">
    <original>M</original>
    <variation>V</variation>
    <location>
        <position position="1316"/>
    </location>
</feature>
<feature type="sequence variant" id="VAR_059216" description="In dbSNP:rs1633399.">
    <original>I</original>
    <variation>T</variation>
    <location>
        <position position="1394"/>
    </location>
</feature>
<feature type="sequence variant" id="VAR_059217" description="In dbSNP:rs2073738.">
    <original>V</original>
    <variation>M</variation>
    <location>
        <position position="1592"/>
    </location>
</feature>
<feature type="sequence variant" id="VAR_059218" description="In dbSNP:rs5748024.">
    <original>R</original>
    <variation>H</variation>
    <location>
        <position position="1620"/>
    </location>
</feature>
<feature type="sequence conflict" description="In Ref. 1; AAC50494." evidence="10" ref="1">
    <original>P</original>
    <variation>H</variation>
    <location>
        <position position="193"/>
    </location>
</feature>
<feature type="sequence conflict" description="In Ref. 1; AAC50494." evidence="10" ref="1">
    <original>L</original>
    <variation>H</variation>
    <location>
        <position position="215"/>
    </location>
</feature>
<feature type="sequence conflict" description="In Ref. 2; CAA64752." evidence="10" ref="2">
    <original>K</original>
    <variation>T</variation>
    <location>
        <position position="320"/>
    </location>
</feature>
<feature type="sequence conflict" description="In Ref. 1; AAC50494." evidence="10" ref="1">
    <original>L</original>
    <variation>Q</variation>
    <location>
        <position position="530"/>
    </location>
</feature>
<feature type="sequence conflict" description="In Ref. 3; AAB40908/AAB40909." evidence="10" ref="3">
    <original>E</original>
    <variation>K</variation>
    <location>
        <position position="1474"/>
    </location>
</feature>
<feature type="sequence conflict" description="In Ref. 3; AAB40908/AAB40909." evidence="10" ref="3">
    <original>RKQEEHVTEPAPLVFDFDGHE</original>
    <variation>PPSKRSM</variation>
    <location>
        <begin position="1620"/>
        <end position="1640"/>
    </location>
</feature>
<protein>
    <recommendedName>
        <fullName>Clathrin heavy chain 2</fullName>
    </recommendedName>
    <alternativeName>
        <fullName>Clathrin heavy chain on chromosome 22</fullName>
        <shortName>CLH-22</shortName>
    </alternativeName>
</protein>
<organism>
    <name type="scientific">Homo sapiens</name>
    <name type="common">Human</name>
    <dbReference type="NCBI Taxonomy" id="9606"/>
    <lineage>
        <taxon>Eukaryota</taxon>
        <taxon>Metazoa</taxon>
        <taxon>Chordata</taxon>
        <taxon>Craniata</taxon>
        <taxon>Vertebrata</taxon>
        <taxon>Euteleostomi</taxon>
        <taxon>Mammalia</taxon>
        <taxon>Eutheria</taxon>
        <taxon>Euarchontoglires</taxon>
        <taxon>Primates</taxon>
        <taxon>Haplorrhini</taxon>
        <taxon>Catarrhini</taxon>
        <taxon>Hominidae</taxon>
        <taxon>Homo</taxon>
    </lineage>
</organism>